<sequence length="293" mass="31582">MTDTTRSLRDCLAPAKLNLFLHITGRRPDGYHELQSVFQLLDWGDRLHFTLRDDGKVSRKTDVPGVPEETDLIVRAASLLKAHTGTAAGVDIEIDKRLPMGAGLGGGSSDAATTLLALNRLWKLDLPRATLQSLAVKLGADVPFFVFGKNAFAEGIGEALQAVELPTRWFLVVTPRVHVPTAAIFSEKSLTRDSKPITITDFLAQQDCNTGWPDSFGRNDMQPVVTSKYAEVAKVVGWFYNLTPARMTGSGASVFAAFKSKAEAGAAQAQLPAGWDSAVAESLGEHPLFAFAS</sequence>
<name>ISPE_BURTA</name>
<reference key="1">
    <citation type="journal article" date="2005" name="BMC Genomics">
        <title>Bacterial genome adaptation to niches: divergence of the potential virulence genes in three Burkholderia species of different survival strategies.</title>
        <authorList>
            <person name="Kim H.S."/>
            <person name="Schell M.A."/>
            <person name="Yu Y."/>
            <person name="Ulrich R.L."/>
            <person name="Sarria S.H."/>
            <person name="Nierman W.C."/>
            <person name="DeShazer D."/>
        </authorList>
    </citation>
    <scope>NUCLEOTIDE SEQUENCE [LARGE SCALE GENOMIC DNA]</scope>
    <source>
        <strain>ATCC 700388 / DSM 13276 / CCUG 48851 / CIP 106301 / E264</strain>
    </source>
</reference>
<comment type="function">
    <text evidence="1">Catalyzes the phosphorylation of the position 2 hydroxy group of 4-diphosphocytidyl-2C-methyl-D-erythritol.</text>
</comment>
<comment type="catalytic activity">
    <reaction evidence="1">
        <text>4-CDP-2-C-methyl-D-erythritol + ATP = 4-CDP-2-C-methyl-D-erythritol 2-phosphate + ADP + H(+)</text>
        <dbReference type="Rhea" id="RHEA:18437"/>
        <dbReference type="ChEBI" id="CHEBI:15378"/>
        <dbReference type="ChEBI" id="CHEBI:30616"/>
        <dbReference type="ChEBI" id="CHEBI:57823"/>
        <dbReference type="ChEBI" id="CHEBI:57919"/>
        <dbReference type="ChEBI" id="CHEBI:456216"/>
        <dbReference type="EC" id="2.7.1.148"/>
    </reaction>
</comment>
<comment type="pathway">
    <text evidence="1">Isoprenoid biosynthesis; isopentenyl diphosphate biosynthesis via DXP pathway; isopentenyl diphosphate from 1-deoxy-D-xylulose 5-phosphate: step 3/6.</text>
</comment>
<comment type="similarity">
    <text evidence="1">Belongs to the GHMP kinase family. IspE subfamily.</text>
</comment>
<gene>
    <name evidence="1" type="primary">ispE</name>
    <name type="ordered locus">BTH_I0476</name>
</gene>
<dbReference type="EC" id="2.7.1.148" evidence="1"/>
<dbReference type="EMBL" id="CP000086">
    <property type="protein sequence ID" value="ABC37014.1"/>
    <property type="molecule type" value="Genomic_DNA"/>
</dbReference>
<dbReference type="RefSeq" id="WP_009908438.1">
    <property type="nucleotide sequence ID" value="NZ_CP008785.1"/>
</dbReference>
<dbReference type="SMR" id="Q2T1B6"/>
<dbReference type="ChEMBL" id="CHEMBL3734646"/>
<dbReference type="GeneID" id="45120239"/>
<dbReference type="KEGG" id="bte:BTH_I0476"/>
<dbReference type="HOGENOM" id="CLU_053057_3_0_4"/>
<dbReference type="UniPathway" id="UPA00056">
    <property type="reaction ID" value="UER00094"/>
</dbReference>
<dbReference type="Proteomes" id="UP000001930">
    <property type="component" value="Chromosome I"/>
</dbReference>
<dbReference type="GO" id="GO:0050515">
    <property type="term" value="F:4-(cytidine 5'-diphospho)-2-C-methyl-D-erythritol kinase activity"/>
    <property type="evidence" value="ECO:0007669"/>
    <property type="project" value="UniProtKB-UniRule"/>
</dbReference>
<dbReference type="GO" id="GO:0005524">
    <property type="term" value="F:ATP binding"/>
    <property type="evidence" value="ECO:0007669"/>
    <property type="project" value="UniProtKB-UniRule"/>
</dbReference>
<dbReference type="GO" id="GO:0019288">
    <property type="term" value="P:isopentenyl diphosphate biosynthetic process, methylerythritol 4-phosphate pathway"/>
    <property type="evidence" value="ECO:0007669"/>
    <property type="project" value="UniProtKB-UniRule"/>
</dbReference>
<dbReference type="GO" id="GO:0016114">
    <property type="term" value="P:terpenoid biosynthetic process"/>
    <property type="evidence" value="ECO:0007669"/>
    <property type="project" value="InterPro"/>
</dbReference>
<dbReference type="Gene3D" id="3.30.230.10">
    <property type="match status" value="1"/>
</dbReference>
<dbReference type="Gene3D" id="3.30.70.890">
    <property type="entry name" value="GHMP kinase, C-terminal domain"/>
    <property type="match status" value="1"/>
</dbReference>
<dbReference type="HAMAP" id="MF_00061">
    <property type="entry name" value="IspE"/>
    <property type="match status" value="1"/>
</dbReference>
<dbReference type="InterPro" id="IPR013750">
    <property type="entry name" value="GHMP_kinase_C_dom"/>
</dbReference>
<dbReference type="InterPro" id="IPR036554">
    <property type="entry name" value="GHMP_kinase_C_sf"/>
</dbReference>
<dbReference type="InterPro" id="IPR006204">
    <property type="entry name" value="GHMP_kinase_N_dom"/>
</dbReference>
<dbReference type="InterPro" id="IPR004424">
    <property type="entry name" value="IspE"/>
</dbReference>
<dbReference type="InterPro" id="IPR020568">
    <property type="entry name" value="Ribosomal_Su5_D2-typ_SF"/>
</dbReference>
<dbReference type="InterPro" id="IPR014721">
    <property type="entry name" value="Ribsml_uS5_D2-typ_fold_subgr"/>
</dbReference>
<dbReference type="NCBIfam" id="TIGR00154">
    <property type="entry name" value="ispE"/>
    <property type="match status" value="1"/>
</dbReference>
<dbReference type="NCBIfam" id="NF011202">
    <property type="entry name" value="PRK14608.1"/>
    <property type="match status" value="1"/>
</dbReference>
<dbReference type="PANTHER" id="PTHR43527">
    <property type="entry name" value="4-DIPHOSPHOCYTIDYL-2-C-METHYL-D-ERYTHRITOL KINASE, CHLOROPLASTIC"/>
    <property type="match status" value="1"/>
</dbReference>
<dbReference type="PANTHER" id="PTHR43527:SF2">
    <property type="entry name" value="4-DIPHOSPHOCYTIDYL-2-C-METHYL-D-ERYTHRITOL KINASE, CHLOROPLASTIC"/>
    <property type="match status" value="1"/>
</dbReference>
<dbReference type="Pfam" id="PF08544">
    <property type="entry name" value="GHMP_kinases_C"/>
    <property type="match status" value="1"/>
</dbReference>
<dbReference type="Pfam" id="PF00288">
    <property type="entry name" value="GHMP_kinases_N"/>
    <property type="match status" value="1"/>
</dbReference>
<dbReference type="PIRSF" id="PIRSF010376">
    <property type="entry name" value="IspE"/>
    <property type="match status" value="1"/>
</dbReference>
<dbReference type="SUPFAM" id="SSF55060">
    <property type="entry name" value="GHMP Kinase, C-terminal domain"/>
    <property type="match status" value="1"/>
</dbReference>
<dbReference type="SUPFAM" id="SSF54211">
    <property type="entry name" value="Ribosomal protein S5 domain 2-like"/>
    <property type="match status" value="1"/>
</dbReference>
<evidence type="ECO:0000255" key="1">
    <source>
        <dbReference type="HAMAP-Rule" id="MF_00061"/>
    </source>
</evidence>
<feature type="chain" id="PRO_0000235077" description="4-diphosphocytidyl-2-C-methyl-D-erythritol kinase">
    <location>
        <begin position="1"/>
        <end position="293"/>
    </location>
</feature>
<feature type="active site" evidence="1">
    <location>
        <position position="16"/>
    </location>
</feature>
<feature type="active site" evidence="1">
    <location>
        <position position="141"/>
    </location>
</feature>
<feature type="binding site" evidence="1">
    <location>
        <begin position="99"/>
        <end position="109"/>
    </location>
    <ligand>
        <name>ATP</name>
        <dbReference type="ChEBI" id="CHEBI:30616"/>
    </ligand>
</feature>
<protein>
    <recommendedName>
        <fullName evidence="1">4-diphosphocytidyl-2-C-methyl-D-erythritol kinase</fullName>
        <shortName evidence="1">CMK</shortName>
        <ecNumber evidence="1">2.7.1.148</ecNumber>
    </recommendedName>
    <alternativeName>
        <fullName evidence="1">4-(cytidine-5'-diphospho)-2-C-methyl-D-erythritol kinase</fullName>
    </alternativeName>
</protein>
<accession>Q2T1B6</accession>
<organism>
    <name type="scientific">Burkholderia thailandensis (strain ATCC 700388 / DSM 13276 / CCUG 48851 / CIP 106301 / E264)</name>
    <dbReference type="NCBI Taxonomy" id="271848"/>
    <lineage>
        <taxon>Bacteria</taxon>
        <taxon>Pseudomonadati</taxon>
        <taxon>Pseudomonadota</taxon>
        <taxon>Betaproteobacteria</taxon>
        <taxon>Burkholderiales</taxon>
        <taxon>Burkholderiaceae</taxon>
        <taxon>Burkholderia</taxon>
        <taxon>pseudomallei group</taxon>
    </lineage>
</organism>
<proteinExistence type="inferred from homology"/>
<keyword id="KW-0067">ATP-binding</keyword>
<keyword id="KW-0414">Isoprene biosynthesis</keyword>
<keyword id="KW-0418">Kinase</keyword>
<keyword id="KW-0547">Nucleotide-binding</keyword>
<keyword id="KW-0808">Transferase</keyword>